<feature type="chain" id="PRO_0000102056" description="ATP-dependent DNA helicase PcrA">
    <location>
        <begin position="1"/>
        <end position="730"/>
    </location>
</feature>
<feature type="domain" description="UvrD-like helicase ATP-binding" evidence="2">
    <location>
        <begin position="6"/>
        <end position="285"/>
    </location>
</feature>
<feature type="domain" description="UvrD-like helicase C-terminal" evidence="3">
    <location>
        <begin position="286"/>
        <end position="560"/>
    </location>
</feature>
<feature type="region of interest" description="Disordered" evidence="4">
    <location>
        <begin position="641"/>
        <end position="668"/>
    </location>
</feature>
<feature type="compositionally biased region" description="Polar residues" evidence="4">
    <location>
        <begin position="641"/>
        <end position="651"/>
    </location>
</feature>
<feature type="binding site" evidence="2">
    <location>
        <begin position="30"/>
        <end position="35"/>
    </location>
    <ligand>
        <name>ATP</name>
        <dbReference type="ChEBI" id="CHEBI:30616"/>
    </ligand>
</feature>
<feature type="binding site" evidence="1">
    <location>
        <position position="283"/>
    </location>
    <ligand>
        <name>ATP</name>
        <dbReference type="ChEBI" id="CHEBI:30616"/>
    </ligand>
</feature>
<protein>
    <recommendedName>
        <fullName>ATP-dependent DNA helicase PcrA</fullName>
        <ecNumber>5.6.2.4</ecNumber>
    </recommendedName>
    <alternativeName>
        <fullName evidence="5">DNA 3'-5' helicase PcrA</fullName>
    </alternativeName>
</protein>
<gene>
    <name type="primary">pcrA</name>
    <name type="ordered locus">SACOL1966</name>
</gene>
<sequence length="730" mass="84074">MNALLNHMNTEQSEAVKTTEGPLLIMAGAGSGKTRVLTHRIAYLLDEKDVSPYNVLAITFTNKAAREMKERVQKLVGDQAEVIWMSTFHSMCVRILRRDADRIGIERNFTIIDPTDQKSVIKDVLKNENIDSKKFEPRMFIGAISNLKNELKTPADAQKEATDYHSQMVATVYSGYQRQLSRNEALDFDDLIMTTINLFERVPEVLEYYQNKFQYIHVDEYQDTNKAQYTLVKLLASKFKNLCVVGDSDQSIYGWRGADIQNILSFEKDYPEANTIFLEQNYRSTKTILNAANEVIKNNSERKPKGLWTANTNGEKIHYYEAMTERDEAEFVIREIMKHQRNGKKYQDMAILYRTNAQSRVLEETFMKSNMPYTMVGGQKFYDRKEIKDLLSYLRIIANSNDDISLQRIINVPKRGVGPSSVEKVQNYALQNNISMFDALGEADFIGLSKKVTQECLNFYELIQSLIKEQEFLEIHEIVDEVLQKSGYREMLERENTLESRSRLENIDEFMSVPKDYEENTPLEEQSLINFLTDLSLVADIDEADTENGVTLMTMHSAKGLEFPIVFIMGMEESLFPHIRAIKSEDDHEMQEERRICYVAITRAEEVLYITHATSRMLFGRPQSNMPSRFLKEIPESLLENHSSGKRQTIQPKAKPFAKRGFSQRTTSTKKQVLSSDWNVGDKVMHKAWGEGMVSNVNEKNGSIELDIIFKSQGPKRLLAQFAPIEKKED</sequence>
<name>PCRA_STAAC</name>
<organism>
    <name type="scientific">Staphylococcus aureus (strain COL)</name>
    <dbReference type="NCBI Taxonomy" id="93062"/>
    <lineage>
        <taxon>Bacteria</taxon>
        <taxon>Bacillati</taxon>
        <taxon>Bacillota</taxon>
        <taxon>Bacilli</taxon>
        <taxon>Bacillales</taxon>
        <taxon>Staphylococcaceae</taxon>
        <taxon>Staphylococcus</taxon>
    </lineage>
</organism>
<dbReference type="EC" id="5.6.2.4"/>
<dbReference type="EMBL" id="CP000046">
    <property type="protein sequence ID" value="AAW36936.1"/>
    <property type="molecule type" value="Genomic_DNA"/>
</dbReference>
<dbReference type="RefSeq" id="WP_000992921.1">
    <property type="nucleotide sequence ID" value="NZ_JBGOFO010000006.1"/>
</dbReference>
<dbReference type="SMR" id="Q5HEL7"/>
<dbReference type="KEGG" id="sac:SACOL1966"/>
<dbReference type="HOGENOM" id="CLU_004585_5_2_9"/>
<dbReference type="Proteomes" id="UP000000530">
    <property type="component" value="Chromosome"/>
</dbReference>
<dbReference type="GO" id="GO:0005829">
    <property type="term" value="C:cytosol"/>
    <property type="evidence" value="ECO:0007669"/>
    <property type="project" value="TreeGrafter"/>
</dbReference>
<dbReference type="GO" id="GO:0033202">
    <property type="term" value="C:DNA helicase complex"/>
    <property type="evidence" value="ECO:0007669"/>
    <property type="project" value="TreeGrafter"/>
</dbReference>
<dbReference type="GO" id="GO:0043138">
    <property type="term" value="F:3'-5' DNA helicase activity"/>
    <property type="evidence" value="ECO:0007669"/>
    <property type="project" value="TreeGrafter"/>
</dbReference>
<dbReference type="GO" id="GO:0005524">
    <property type="term" value="F:ATP binding"/>
    <property type="evidence" value="ECO:0007669"/>
    <property type="project" value="UniProtKB-KW"/>
</dbReference>
<dbReference type="GO" id="GO:0016887">
    <property type="term" value="F:ATP hydrolysis activity"/>
    <property type="evidence" value="ECO:0007669"/>
    <property type="project" value="RHEA"/>
</dbReference>
<dbReference type="GO" id="GO:0003677">
    <property type="term" value="F:DNA binding"/>
    <property type="evidence" value="ECO:0007669"/>
    <property type="project" value="UniProtKB-KW"/>
</dbReference>
<dbReference type="GO" id="GO:0006260">
    <property type="term" value="P:DNA replication"/>
    <property type="evidence" value="ECO:0007669"/>
    <property type="project" value="InterPro"/>
</dbReference>
<dbReference type="GO" id="GO:0000725">
    <property type="term" value="P:recombinational repair"/>
    <property type="evidence" value="ECO:0007669"/>
    <property type="project" value="TreeGrafter"/>
</dbReference>
<dbReference type="CDD" id="cd17932">
    <property type="entry name" value="DEXQc_UvrD"/>
    <property type="match status" value="1"/>
</dbReference>
<dbReference type="CDD" id="cd18807">
    <property type="entry name" value="SF1_C_UvrD"/>
    <property type="match status" value="1"/>
</dbReference>
<dbReference type="FunFam" id="1.10.10.160:FF:000001">
    <property type="entry name" value="ATP-dependent DNA helicase"/>
    <property type="match status" value="1"/>
</dbReference>
<dbReference type="FunFam" id="1.10.486.10:FF:000003">
    <property type="entry name" value="ATP-dependent DNA helicase"/>
    <property type="match status" value="1"/>
</dbReference>
<dbReference type="Gene3D" id="1.10.10.160">
    <property type="match status" value="1"/>
</dbReference>
<dbReference type="Gene3D" id="3.40.50.300">
    <property type="entry name" value="P-loop containing nucleotide triphosphate hydrolases"/>
    <property type="match status" value="2"/>
</dbReference>
<dbReference type="Gene3D" id="1.10.486.10">
    <property type="entry name" value="PCRA, domain 4"/>
    <property type="match status" value="1"/>
</dbReference>
<dbReference type="InterPro" id="IPR005751">
    <property type="entry name" value="ATP-dep_DNA_helicase_PcrA"/>
</dbReference>
<dbReference type="InterPro" id="IPR013986">
    <property type="entry name" value="DExx_box_DNA_helicase_dom_sf"/>
</dbReference>
<dbReference type="InterPro" id="IPR014017">
    <property type="entry name" value="DNA_helicase_UvrD-like_C"/>
</dbReference>
<dbReference type="InterPro" id="IPR000212">
    <property type="entry name" value="DNA_helicase_UvrD/REP"/>
</dbReference>
<dbReference type="InterPro" id="IPR027417">
    <property type="entry name" value="P-loop_NTPase"/>
</dbReference>
<dbReference type="InterPro" id="IPR014016">
    <property type="entry name" value="UvrD-like_ATP-bd"/>
</dbReference>
<dbReference type="NCBIfam" id="TIGR01073">
    <property type="entry name" value="pcrA"/>
    <property type="match status" value="1"/>
</dbReference>
<dbReference type="PANTHER" id="PTHR11070:SF2">
    <property type="entry name" value="ATP-DEPENDENT DNA HELICASE SRS2"/>
    <property type="match status" value="1"/>
</dbReference>
<dbReference type="PANTHER" id="PTHR11070">
    <property type="entry name" value="UVRD / RECB / PCRA DNA HELICASE FAMILY MEMBER"/>
    <property type="match status" value="1"/>
</dbReference>
<dbReference type="Pfam" id="PF21196">
    <property type="entry name" value="PcrA_UvrD_tudor"/>
    <property type="match status" value="1"/>
</dbReference>
<dbReference type="Pfam" id="PF00580">
    <property type="entry name" value="UvrD-helicase"/>
    <property type="match status" value="1"/>
</dbReference>
<dbReference type="Pfam" id="PF13361">
    <property type="entry name" value="UvrD_C"/>
    <property type="match status" value="1"/>
</dbReference>
<dbReference type="SUPFAM" id="SSF52540">
    <property type="entry name" value="P-loop containing nucleoside triphosphate hydrolases"/>
    <property type="match status" value="1"/>
</dbReference>
<dbReference type="PROSITE" id="PS51198">
    <property type="entry name" value="UVRD_HELICASE_ATP_BIND"/>
    <property type="match status" value="1"/>
</dbReference>
<dbReference type="PROSITE" id="PS51217">
    <property type="entry name" value="UVRD_HELICASE_CTER"/>
    <property type="match status" value="1"/>
</dbReference>
<accession>Q5HEL7</accession>
<evidence type="ECO:0000250" key="1"/>
<evidence type="ECO:0000255" key="2">
    <source>
        <dbReference type="PROSITE-ProRule" id="PRU00560"/>
    </source>
</evidence>
<evidence type="ECO:0000255" key="3">
    <source>
        <dbReference type="PROSITE-ProRule" id="PRU00617"/>
    </source>
</evidence>
<evidence type="ECO:0000256" key="4">
    <source>
        <dbReference type="SAM" id="MobiDB-lite"/>
    </source>
</evidence>
<evidence type="ECO:0000305" key="5"/>
<reference key="1">
    <citation type="journal article" date="2005" name="J. Bacteriol.">
        <title>Insights on evolution of virulence and resistance from the complete genome analysis of an early methicillin-resistant Staphylococcus aureus strain and a biofilm-producing methicillin-resistant Staphylococcus epidermidis strain.</title>
        <authorList>
            <person name="Gill S.R."/>
            <person name="Fouts D.E."/>
            <person name="Archer G.L."/>
            <person name="Mongodin E.F."/>
            <person name="DeBoy R.T."/>
            <person name="Ravel J."/>
            <person name="Paulsen I.T."/>
            <person name="Kolonay J.F."/>
            <person name="Brinkac L.M."/>
            <person name="Beanan M.J."/>
            <person name="Dodson R.J."/>
            <person name="Daugherty S.C."/>
            <person name="Madupu R."/>
            <person name="Angiuoli S.V."/>
            <person name="Durkin A.S."/>
            <person name="Haft D.H."/>
            <person name="Vamathevan J.J."/>
            <person name="Khouri H."/>
            <person name="Utterback T.R."/>
            <person name="Lee C."/>
            <person name="Dimitrov G."/>
            <person name="Jiang L."/>
            <person name="Qin H."/>
            <person name="Weidman J."/>
            <person name="Tran K."/>
            <person name="Kang K.H."/>
            <person name="Hance I.R."/>
            <person name="Nelson K.E."/>
            <person name="Fraser C.M."/>
        </authorList>
    </citation>
    <scope>NUCLEOTIDE SEQUENCE [LARGE SCALE GENOMIC DNA]</scope>
    <source>
        <strain>COL</strain>
    </source>
</reference>
<keyword id="KW-0067">ATP-binding</keyword>
<keyword id="KW-0238">DNA-binding</keyword>
<keyword id="KW-0347">Helicase</keyword>
<keyword id="KW-0378">Hydrolase</keyword>
<keyword id="KW-0413">Isomerase</keyword>
<keyword id="KW-0547">Nucleotide-binding</keyword>
<proteinExistence type="inferred from homology"/>
<comment type="function">
    <text evidence="1">Essential helicase.</text>
</comment>
<comment type="catalytic activity">
    <reaction>
        <text>Couples ATP hydrolysis with the unwinding of duplex DNA by translocating in the 3'-5' direction.</text>
        <dbReference type="EC" id="5.6.2.4"/>
    </reaction>
</comment>
<comment type="catalytic activity">
    <reaction>
        <text>ATP + H2O = ADP + phosphate + H(+)</text>
        <dbReference type="Rhea" id="RHEA:13065"/>
        <dbReference type="ChEBI" id="CHEBI:15377"/>
        <dbReference type="ChEBI" id="CHEBI:15378"/>
        <dbReference type="ChEBI" id="CHEBI:30616"/>
        <dbReference type="ChEBI" id="CHEBI:43474"/>
        <dbReference type="ChEBI" id="CHEBI:456216"/>
        <dbReference type="EC" id="5.6.2.4"/>
    </reaction>
</comment>
<comment type="similarity">
    <text evidence="5">Belongs to the helicase family. UvrD subfamily.</text>
</comment>